<gene>
    <name evidence="1" type="primary">cdh</name>
    <name type="ordered locus">SPA3907</name>
</gene>
<comment type="catalytic activity">
    <reaction evidence="1">
        <text>a CDP-1,2-diacyl-sn-glycerol + H2O = a 1,2-diacyl-sn-glycero-3-phosphate + CMP + 2 H(+)</text>
        <dbReference type="Rhea" id="RHEA:15221"/>
        <dbReference type="ChEBI" id="CHEBI:15377"/>
        <dbReference type="ChEBI" id="CHEBI:15378"/>
        <dbReference type="ChEBI" id="CHEBI:58332"/>
        <dbReference type="ChEBI" id="CHEBI:58608"/>
        <dbReference type="ChEBI" id="CHEBI:60377"/>
        <dbReference type="EC" id="3.6.1.26"/>
    </reaction>
</comment>
<comment type="pathway">
    <text evidence="1">Phospholipid metabolism; CDP-diacylglycerol degradation; phosphatidate from CDP-diacylglycerol: step 1/1.</text>
</comment>
<comment type="subcellular location">
    <subcellularLocation>
        <location evidence="1">Cell inner membrane</location>
        <topology evidence="1">Single-pass membrane protein</topology>
    </subcellularLocation>
</comment>
<comment type="similarity">
    <text evidence="1">Belongs to the Cdh family.</text>
</comment>
<name>CDH_SALPA</name>
<keyword id="KW-0997">Cell inner membrane</keyword>
<keyword id="KW-1003">Cell membrane</keyword>
<keyword id="KW-0378">Hydrolase</keyword>
<keyword id="KW-0444">Lipid biosynthesis</keyword>
<keyword id="KW-0443">Lipid metabolism</keyword>
<keyword id="KW-0472">Membrane</keyword>
<keyword id="KW-0594">Phospholipid biosynthesis</keyword>
<keyword id="KW-1208">Phospholipid metabolism</keyword>
<keyword id="KW-0812">Transmembrane</keyword>
<keyword id="KW-1133">Transmembrane helix</keyword>
<proteinExistence type="inferred from homology"/>
<evidence type="ECO:0000255" key="1">
    <source>
        <dbReference type="HAMAP-Rule" id="MF_00319"/>
    </source>
</evidence>
<dbReference type="EC" id="3.6.1.26" evidence="1"/>
<dbReference type="EMBL" id="CP000026">
    <property type="protein sequence ID" value="AAV79673.1"/>
    <property type="molecule type" value="Genomic_DNA"/>
</dbReference>
<dbReference type="RefSeq" id="WP_000750756.1">
    <property type="nucleotide sequence ID" value="NC_006511.1"/>
</dbReference>
<dbReference type="SMR" id="Q5PIR4"/>
<dbReference type="KEGG" id="spt:SPA3907"/>
<dbReference type="HOGENOM" id="CLU_077117_0_1_6"/>
<dbReference type="UniPathway" id="UPA00609">
    <property type="reaction ID" value="UER00664"/>
</dbReference>
<dbReference type="Proteomes" id="UP000008185">
    <property type="component" value="Chromosome"/>
</dbReference>
<dbReference type="GO" id="GO:0005886">
    <property type="term" value="C:plasma membrane"/>
    <property type="evidence" value="ECO:0007669"/>
    <property type="project" value="UniProtKB-SubCell"/>
</dbReference>
<dbReference type="GO" id="GO:0008715">
    <property type="term" value="F:CDP-diacylglycerol diphosphatase activity"/>
    <property type="evidence" value="ECO:0007669"/>
    <property type="project" value="UniProtKB-UniRule"/>
</dbReference>
<dbReference type="GO" id="GO:0046342">
    <property type="term" value="P:CDP-diacylglycerol catabolic process"/>
    <property type="evidence" value="ECO:0007669"/>
    <property type="project" value="UniProtKB-UniRule"/>
</dbReference>
<dbReference type="GO" id="GO:0008654">
    <property type="term" value="P:phospholipid biosynthetic process"/>
    <property type="evidence" value="ECO:0007669"/>
    <property type="project" value="UniProtKB-KW"/>
</dbReference>
<dbReference type="Gene3D" id="3.30.428.30">
    <property type="entry name" value="HIT family - CDH-like"/>
    <property type="match status" value="1"/>
</dbReference>
<dbReference type="HAMAP" id="MF_00319">
    <property type="entry name" value="Cdh"/>
    <property type="match status" value="1"/>
</dbReference>
<dbReference type="InterPro" id="IPR003763">
    <property type="entry name" value="CDP-diacylglyc_Pase"/>
</dbReference>
<dbReference type="InterPro" id="IPR015993">
    <property type="entry name" value="CDP-diacylglyc_Pase_proteobac"/>
</dbReference>
<dbReference type="InterPro" id="IPR036265">
    <property type="entry name" value="HIT-like_sf"/>
</dbReference>
<dbReference type="NCBIfam" id="TIGR00672">
    <property type="entry name" value="cdh"/>
    <property type="match status" value="1"/>
</dbReference>
<dbReference type="NCBIfam" id="NF003986">
    <property type="entry name" value="PRK05471.1-5"/>
    <property type="match status" value="1"/>
</dbReference>
<dbReference type="NCBIfam" id="NF003987">
    <property type="entry name" value="PRK05471.1-6"/>
    <property type="match status" value="1"/>
</dbReference>
<dbReference type="Pfam" id="PF02611">
    <property type="entry name" value="CDH"/>
    <property type="match status" value="1"/>
</dbReference>
<dbReference type="PIRSF" id="PIRSF001273">
    <property type="entry name" value="CDH"/>
    <property type="match status" value="1"/>
</dbReference>
<dbReference type="SUPFAM" id="SSF54197">
    <property type="entry name" value="HIT-like"/>
    <property type="match status" value="1"/>
</dbReference>
<sequence>MKKTGYFLLAVIVIVAAAGVGYWKFSGNPDALREIVLEQCLPDQLQHQNPAPCAEVKPRAGYVVFKDRHGPLQYLLMPTYRINGTESPLLLEPATPNFFWLAWQARGYMSKKYGHDIPDSAVSLAINSRLGRSQDHLHIHISCIRPDVREQLDNDLTRISTRWLPLPGDLMGHEYLARRVTESELAQRSPFMMLAEEVPEARDHMGRYALAVVRQSDGSFVLLATERNLLTFNRASAEEIQDHSCAILSSR</sequence>
<organism>
    <name type="scientific">Salmonella paratyphi A (strain ATCC 9150 / SARB42)</name>
    <dbReference type="NCBI Taxonomy" id="295319"/>
    <lineage>
        <taxon>Bacteria</taxon>
        <taxon>Pseudomonadati</taxon>
        <taxon>Pseudomonadota</taxon>
        <taxon>Gammaproteobacteria</taxon>
        <taxon>Enterobacterales</taxon>
        <taxon>Enterobacteriaceae</taxon>
        <taxon>Salmonella</taxon>
    </lineage>
</organism>
<accession>Q5PIR4</accession>
<feature type="chain" id="PRO_1000019266" description="CDP-diacylglycerol pyrophosphatase">
    <location>
        <begin position="1"/>
        <end position="251"/>
    </location>
</feature>
<feature type="transmembrane region" description="Helical" evidence="1">
    <location>
        <begin position="5"/>
        <end position="25"/>
    </location>
</feature>
<reference key="1">
    <citation type="journal article" date="2004" name="Nat. Genet.">
        <title>Comparison of genome degradation in Paratyphi A and Typhi, human-restricted serovars of Salmonella enterica that cause typhoid.</title>
        <authorList>
            <person name="McClelland M."/>
            <person name="Sanderson K.E."/>
            <person name="Clifton S.W."/>
            <person name="Latreille P."/>
            <person name="Porwollik S."/>
            <person name="Sabo A."/>
            <person name="Meyer R."/>
            <person name="Bieri T."/>
            <person name="Ozersky P."/>
            <person name="McLellan M."/>
            <person name="Harkins C.R."/>
            <person name="Wang C."/>
            <person name="Nguyen C."/>
            <person name="Berghoff A."/>
            <person name="Elliott G."/>
            <person name="Kohlberg S."/>
            <person name="Strong C."/>
            <person name="Du F."/>
            <person name="Carter J."/>
            <person name="Kremizki C."/>
            <person name="Layman D."/>
            <person name="Leonard S."/>
            <person name="Sun H."/>
            <person name="Fulton L."/>
            <person name="Nash W."/>
            <person name="Miner T."/>
            <person name="Minx P."/>
            <person name="Delehaunty K."/>
            <person name="Fronick C."/>
            <person name="Magrini V."/>
            <person name="Nhan M."/>
            <person name="Warren W."/>
            <person name="Florea L."/>
            <person name="Spieth J."/>
            <person name="Wilson R.K."/>
        </authorList>
    </citation>
    <scope>NUCLEOTIDE SEQUENCE [LARGE SCALE GENOMIC DNA]</scope>
    <source>
        <strain>ATCC 9150 / SARB42</strain>
    </source>
</reference>
<protein>
    <recommendedName>
        <fullName evidence="1">CDP-diacylglycerol pyrophosphatase</fullName>
        <ecNumber evidence="1">3.6.1.26</ecNumber>
    </recommendedName>
    <alternativeName>
        <fullName evidence="1">CDP-diacylglycerol phosphatidylhydrolase</fullName>
    </alternativeName>
    <alternativeName>
        <fullName evidence="1">CDP-diglyceride hydrolase</fullName>
    </alternativeName>
</protein>